<comment type="function">
    <text evidence="1">Regulatory subunit of serine/threonine-protein phosphatase 4.</text>
</comment>
<comment type="subunit">
    <text evidence="1">Serine/threonine-protein phosphatase 4 (PP4) occurs in different assemblies of the catalytic and one or more regulatory subunits.</text>
</comment>
<comment type="similarity">
    <text evidence="3">Belongs to the SMEK family.</text>
</comment>
<name>PP4R3_XENLA</name>
<feature type="chain" id="PRO_0000254602" description="Serine/threonine-protein phosphatase 4 regulatory subunit 3">
    <location>
        <begin position="1"/>
        <end position="822"/>
    </location>
</feature>
<feature type="domain" description="WH1">
    <location>
        <begin position="1"/>
        <end position="100"/>
    </location>
</feature>
<feature type="region of interest" description="Disordered" evidence="2">
    <location>
        <begin position="744"/>
        <end position="822"/>
    </location>
</feature>
<feature type="compositionally biased region" description="Low complexity" evidence="2">
    <location>
        <begin position="761"/>
        <end position="774"/>
    </location>
</feature>
<feature type="compositionally biased region" description="Acidic residues" evidence="2">
    <location>
        <begin position="793"/>
        <end position="808"/>
    </location>
</feature>
<keyword id="KW-1185">Reference proteome</keyword>
<sequence>MTDTRRRVKVYTLNEDRQWDDRGTGHVSSGYVERLKGMSLLVRAESDGSLLLESKINTNTAYQKQQDTLIVWSEAENYDLALSFQEKAGCDEIWEKICQVQGKDPSVDITQDLVDESEEERFDDMSSPGLELPSCELSRLEEIAEVVASSLPSPLRREKLAVALENEGYLKKLLELFHVCEDLENIEGLHHLYEVIKGIFLLNRTALFEVMFSEDCMMDIIGCLEYDPSLPTQRKHREFLTKTAKFKEVIPISDPELKQKIHQTYRVQYIQDVVLPTPSVFEENMLSTLHSFIFFNKVEIVGMLQEDEKFLTELFAHLTDEATDDEKRQELVNFLKEFCAFSQTLQPQNRDAFFKTLSNMGILPALEVILGMDDPQVRSAATDIFSYLVEYNPSMVREFVMQEAQQNDDDILLINLIIEHMICDTDPELGGAVQLTGLLRTLVDPENMLATTNKTEKTEFLGFFYKHCMHVLTAPLLANTTEEKPSKDDFQAAQLLALILELLTFCVEHHTYHIKNYIINKDILRRVLVLMSSMHSFLGLCALRFMRKIVGLKDEFYNRYIVKSFLFEPVVKAFLNNGSRYNLMNSAILEIFEYIRVEDIKSLTAHVVENYWKALEDVEYVQTFKGLKLRYDQQRERQDNPKLDSMRSILRNHRYRRDARSIEDEEEMWFNTDEDDLEDGEPVVLPSEKIKNSEDLMDPISKFMERKKLKESEEKEVLLKTNLTGRQSPNFKLSFSGATKTNLTSQLSASGHPGSPGSPGSPGSPESPGSVSKSTPQAAAITTKGGLIGLVDYPDDDEEDDDNDEEEKEERLPLTKKARLGS</sequence>
<dbReference type="EMBL" id="BC072239">
    <property type="protein sequence ID" value="AAH72239.1"/>
    <property type="molecule type" value="mRNA"/>
</dbReference>
<dbReference type="RefSeq" id="NP_001085057.1">
    <property type="nucleotide sequence ID" value="NM_001091588.1"/>
</dbReference>
<dbReference type="DNASU" id="432127"/>
<dbReference type="GeneID" id="432127"/>
<dbReference type="KEGG" id="xla:432127"/>
<dbReference type="AGR" id="Xenbase:XB-GENE-5858385"/>
<dbReference type="CTD" id="432127"/>
<dbReference type="Xenbase" id="XB-GENE-5858385">
    <property type="gene designation" value="ppp4r3a.S"/>
</dbReference>
<dbReference type="OMA" id="ALMTHNN"/>
<dbReference type="OrthoDB" id="27483at2759"/>
<dbReference type="Proteomes" id="UP000186698">
    <property type="component" value="Chromosome 8S"/>
</dbReference>
<dbReference type="Bgee" id="432127">
    <property type="expression patterns" value="Expressed in blastula and 19 other cell types or tissues"/>
</dbReference>
<dbReference type="GO" id="GO:0005654">
    <property type="term" value="C:nucleoplasm"/>
    <property type="evidence" value="ECO:0000318"/>
    <property type="project" value="GO_Central"/>
</dbReference>
<dbReference type="GO" id="GO:0030289">
    <property type="term" value="C:protein phosphatase 4 complex"/>
    <property type="evidence" value="ECO:0000318"/>
    <property type="project" value="GO_Central"/>
</dbReference>
<dbReference type="GO" id="GO:0072542">
    <property type="term" value="F:protein phosphatase activator activity"/>
    <property type="evidence" value="ECO:0000318"/>
    <property type="project" value="GO_Central"/>
</dbReference>
<dbReference type="GO" id="GO:0006974">
    <property type="term" value="P:DNA damage response"/>
    <property type="evidence" value="ECO:0000318"/>
    <property type="project" value="GO_Central"/>
</dbReference>
<dbReference type="GO" id="GO:2000779">
    <property type="term" value="P:regulation of double-strand break repair"/>
    <property type="evidence" value="ECO:0000318"/>
    <property type="project" value="GO_Central"/>
</dbReference>
<dbReference type="FunFam" id="2.30.29.30:FF:000051">
    <property type="entry name" value="Serine/threonine-protein phosphatase 4 regulatory subunit 3B"/>
    <property type="match status" value="1"/>
</dbReference>
<dbReference type="Gene3D" id="1.25.10.10">
    <property type="entry name" value="Leucine-rich Repeat Variant"/>
    <property type="match status" value="1"/>
</dbReference>
<dbReference type="Gene3D" id="2.30.29.30">
    <property type="entry name" value="Pleckstrin-homology domain (PH domain)/Phosphotyrosine-binding domain (PTB)"/>
    <property type="match status" value="1"/>
</dbReference>
<dbReference type="InterPro" id="IPR011989">
    <property type="entry name" value="ARM-like"/>
</dbReference>
<dbReference type="InterPro" id="IPR016024">
    <property type="entry name" value="ARM-type_fold"/>
</dbReference>
<dbReference type="InterPro" id="IPR055236">
    <property type="entry name" value="EVH1_PP4R3"/>
</dbReference>
<dbReference type="InterPro" id="IPR006887">
    <property type="entry name" value="P4R3-like_central_dom"/>
</dbReference>
<dbReference type="InterPro" id="IPR011993">
    <property type="entry name" value="PH-like_dom_sf"/>
</dbReference>
<dbReference type="InterPro" id="IPR051137">
    <property type="entry name" value="PP4R3-like"/>
</dbReference>
<dbReference type="PANTHER" id="PTHR23318">
    <property type="entry name" value="ATP SYNTHASE GAMMA-RELATED"/>
    <property type="match status" value="1"/>
</dbReference>
<dbReference type="PANTHER" id="PTHR23318:SF3">
    <property type="entry name" value="SERINE_THREONINE-PROTEIN PHOSPHATASE 4 REGULATORY SUBUNIT 3A"/>
    <property type="match status" value="1"/>
</dbReference>
<dbReference type="Pfam" id="PF22972">
    <property type="entry name" value="EVH1_PP4R3"/>
    <property type="match status" value="1"/>
</dbReference>
<dbReference type="Pfam" id="PF04802">
    <property type="entry name" value="PP4R3"/>
    <property type="match status" value="1"/>
</dbReference>
<dbReference type="SUPFAM" id="SSF48371">
    <property type="entry name" value="ARM repeat"/>
    <property type="match status" value="1"/>
</dbReference>
<dbReference type="SUPFAM" id="SSF50729">
    <property type="entry name" value="PH domain-like"/>
    <property type="match status" value="1"/>
</dbReference>
<protein>
    <recommendedName>
        <fullName>Serine/threonine-protein phosphatase 4 regulatory subunit 3</fullName>
    </recommendedName>
    <alternativeName>
        <fullName>SMEK homolog 1</fullName>
    </alternativeName>
</protein>
<gene>
    <name type="primary">smek1</name>
</gene>
<proteinExistence type="evidence at transcript level"/>
<accession>Q6INN7</accession>
<organism>
    <name type="scientific">Xenopus laevis</name>
    <name type="common">African clawed frog</name>
    <dbReference type="NCBI Taxonomy" id="8355"/>
    <lineage>
        <taxon>Eukaryota</taxon>
        <taxon>Metazoa</taxon>
        <taxon>Chordata</taxon>
        <taxon>Craniata</taxon>
        <taxon>Vertebrata</taxon>
        <taxon>Euteleostomi</taxon>
        <taxon>Amphibia</taxon>
        <taxon>Batrachia</taxon>
        <taxon>Anura</taxon>
        <taxon>Pipoidea</taxon>
        <taxon>Pipidae</taxon>
        <taxon>Xenopodinae</taxon>
        <taxon>Xenopus</taxon>
        <taxon>Xenopus</taxon>
    </lineage>
</organism>
<reference key="1">
    <citation type="submission" date="2004-06" db="EMBL/GenBank/DDBJ databases">
        <authorList>
            <consortium name="NIH - Xenopus Gene Collection (XGC) project"/>
        </authorList>
    </citation>
    <scope>NUCLEOTIDE SEQUENCE [LARGE SCALE MRNA]</scope>
    <source>
        <tissue>Kidney</tissue>
    </source>
</reference>
<evidence type="ECO:0000250" key="1"/>
<evidence type="ECO:0000256" key="2">
    <source>
        <dbReference type="SAM" id="MobiDB-lite"/>
    </source>
</evidence>
<evidence type="ECO:0000305" key="3"/>